<gene>
    <name evidence="1" type="primary">cysD</name>
    <name type="ordered locus">Abu_2174</name>
</gene>
<evidence type="ECO:0000255" key="1">
    <source>
        <dbReference type="HAMAP-Rule" id="MF_00064"/>
    </source>
</evidence>
<accession>A8EWR5</accession>
<name>CYSD_ALIB4</name>
<dbReference type="EC" id="2.7.7.4" evidence="1"/>
<dbReference type="EMBL" id="CP000361">
    <property type="protein sequence ID" value="ABV68388.1"/>
    <property type="molecule type" value="Genomic_DNA"/>
</dbReference>
<dbReference type="RefSeq" id="WP_012148033.1">
    <property type="nucleotide sequence ID" value="NC_009850.1"/>
</dbReference>
<dbReference type="SMR" id="A8EWR5"/>
<dbReference type="STRING" id="367737.Abu_2174"/>
<dbReference type="GeneID" id="24305020"/>
<dbReference type="KEGG" id="abu:Abu_2174"/>
<dbReference type="eggNOG" id="COG0175">
    <property type="taxonomic scope" value="Bacteria"/>
</dbReference>
<dbReference type="HOGENOM" id="CLU_043026_0_0_7"/>
<dbReference type="UniPathway" id="UPA00140">
    <property type="reaction ID" value="UER00204"/>
</dbReference>
<dbReference type="Proteomes" id="UP000001136">
    <property type="component" value="Chromosome"/>
</dbReference>
<dbReference type="GO" id="GO:0005524">
    <property type="term" value="F:ATP binding"/>
    <property type="evidence" value="ECO:0007669"/>
    <property type="project" value="UniProtKB-KW"/>
</dbReference>
<dbReference type="GO" id="GO:0004781">
    <property type="term" value="F:sulfate adenylyltransferase (ATP) activity"/>
    <property type="evidence" value="ECO:0007669"/>
    <property type="project" value="UniProtKB-UniRule"/>
</dbReference>
<dbReference type="GO" id="GO:0070814">
    <property type="term" value="P:hydrogen sulfide biosynthetic process"/>
    <property type="evidence" value="ECO:0007669"/>
    <property type="project" value="UniProtKB-UniRule"/>
</dbReference>
<dbReference type="GO" id="GO:0000103">
    <property type="term" value="P:sulfate assimilation"/>
    <property type="evidence" value="ECO:0007669"/>
    <property type="project" value="UniProtKB-UniRule"/>
</dbReference>
<dbReference type="CDD" id="cd23946">
    <property type="entry name" value="Sulfate_adenylyltransferase_2"/>
    <property type="match status" value="1"/>
</dbReference>
<dbReference type="FunFam" id="3.40.50.620:FF:000002">
    <property type="entry name" value="Sulfate adenylyltransferase subunit 2"/>
    <property type="match status" value="1"/>
</dbReference>
<dbReference type="Gene3D" id="3.40.50.620">
    <property type="entry name" value="HUPs"/>
    <property type="match status" value="1"/>
</dbReference>
<dbReference type="HAMAP" id="MF_00064">
    <property type="entry name" value="Sulf_adenylyltr_sub2"/>
    <property type="match status" value="1"/>
</dbReference>
<dbReference type="InterPro" id="IPR002500">
    <property type="entry name" value="PAPS_reduct_dom"/>
</dbReference>
<dbReference type="InterPro" id="IPR014729">
    <property type="entry name" value="Rossmann-like_a/b/a_fold"/>
</dbReference>
<dbReference type="InterPro" id="IPR011784">
    <property type="entry name" value="SO4_adenylTrfase_ssu"/>
</dbReference>
<dbReference type="InterPro" id="IPR050128">
    <property type="entry name" value="Sulfate_adenylyltrnsfr_sub2"/>
</dbReference>
<dbReference type="NCBIfam" id="TIGR02039">
    <property type="entry name" value="CysD"/>
    <property type="match status" value="1"/>
</dbReference>
<dbReference type="NCBIfam" id="NF003587">
    <property type="entry name" value="PRK05253.1"/>
    <property type="match status" value="1"/>
</dbReference>
<dbReference type="NCBIfam" id="NF009214">
    <property type="entry name" value="PRK12563.1"/>
    <property type="match status" value="1"/>
</dbReference>
<dbReference type="PANTHER" id="PTHR43196">
    <property type="entry name" value="SULFATE ADENYLYLTRANSFERASE SUBUNIT 2"/>
    <property type="match status" value="1"/>
</dbReference>
<dbReference type="PANTHER" id="PTHR43196:SF1">
    <property type="entry name" value="SULFATE ADENYLYLTRANSFERASE SUBUNIT 2"/>
    <property type="match status" value="1"/>
</dbReference>
<dbReference type="Pfam" id="PF01507">
    <property type="entry name" value="PAPS_reduct"/>
    <property type="match status" value="1"/>
</dbReference>
<dbReference type="PIRSF" id="PIRSF002936">
    <property type="entry name" value="CysDAde_trans"/>
    <property type="match status" value="1"/>
</dbReference>
<dbReference type="SUPFAM" id="SSF52402">
    <property type="entry name" value="Adenine nucleotide alpha hydrolases-like"/>
    <property type="match status" value="1"/>
</dbReference>
<reference key="1">
    <citation type="journal article" date="2007" name="PLoS ONE">
        <title>The complete genome sequence and analysis of the Epsilonproteobacterium Arcobacter butzleri.</title>
        <authorList>
            <person name="Miller W.G."/>
            <person name="Parker C.T."/>
            <person name="Rubenfield M."/>
            <person name="Mendz G.L."/>
            <person name="Woesten M.M.S.M."/>
            <person name="Ussery D.W."/>
            <person name="Stolz J.F."/>
            <person name="Binnewies T.T."/>
            <person name="Hallin P.F."/>
            <person name="Wang G."/>
            <person name="Malek J.A."/>
            <person name="Rogosin A."/>
            <person name="Stanker L.H."/>
            <person name="Mandrell R.E."/>
        </authorList>
    </citation>
    <scope>NUCLEOTIDE SEQUENCE [LARGE SCALE GENOMIC DNA]</scope>
    <source>
        <strain>RM4018</strain>
    </source>
</reference>
<protein>
    <recommendedName>
        <fullName evidence="1">Sulfate adenylyltransferase subunit 2</fullName>
        <ecNumber evidence="1">2.7.7.4</ecNumber>
    </recommendedName>
    <alternativeName>
        <fullName evidence="1">ATP-sulfurylase small subunit</fullName>
    </alternativeName>
    <alternativeName>
        <fullName evidence="1">Sulfate adenylate transferase</fullName>
        <shortName evidence="1">SAT</shortName>
    </alternativeName>
</protein>
<sequence length="303" mass="34984">MISTERLTHLKQLEAESIHIIREVVAEFSNPVMMYSVGKDSAVMLHLALKAFAPAKLPFPLLHVDTLWKFKEMIAFRDQRAKEEGFELLVHTNPEGVAMNISPFTHGSAVHTDIMKTQGLKQALNKYKFDAVFGGARRDEEKSRAKERIYSFRDKNHRWDPKNQRPELWNIYNGRVHKDESIRVFPISNWTELDIWQYIYLEQIPIVPLYFAAKRPVLEKDGVKIMVDDDRMPIGPDDVIKEEMVRFRTLGCYPLTGAVDSTATTLPEIIQEMLLTKTSERQGRVIDNDSAGSMEKKKIEGYF</sequence>
<organism>
    <name type="scientific">Aliarcobacter butzleri (strain RM4018)</name>
    <name type="common">Arcobacter butzleri</name>
    <dbReference type="NCBI Taxonomy" id="367737"/>
    <lineage>
        <taxon>Bacteria</taxon>
        <taxon>Pseudomonadati</taxon>
        <taxon>Campylobacterota</taxon>
        <taxon>Epsilonproteobacteria</taxon>
        <taxon>Campylobacterales</taxon>
        <taxon>Arcobacteraceae</taxon>
        <taxon>Aliarcobacter</taxon>
    </lineage>
</organism>
<keyword id="KW-0067">ATP-binding</keyword>
<keyword id="KW-0547">Nucleotide-binding</keyword>
<keyword id="KW-0548">Nucleotidyltransferase</keyword>
<keyword id="KW-1185">Reference proteome</keyword>
<keyword id="KW-0808">Transferase</keyword>
<feature type="chain" id="PRO_0000340177" description="Sulfate adenylyltransferase subunit 2">
    <location>
        <begin position="1"/>
        <end position="303"/>
    </location>
</feature>
<comment type="function">
    <text evidence="1">With CysN forms the ATP sulfurylase (ATPS) that catalyzes the adenylation of sulfate producing adenosine 5'-phosphosulfate (APS) and diphosphate, the first enzymatic step in sulfur assimilation pathway. APS synthesis involves the formation of a high-energy phosphoric-sulfuric acid anhydride bond driven by GTP hydrolysis by CysN coupled to ATP hydrolysis by CysD.</text>
</comment>
<comment type="catalytic activity">
    <reaction evidence="1">
        <text>sulfate + ATP + H(+) = adenosine 5'-phosphosulfate + diphosphate</text>
        <dbReference type="Rhea" id="RHEA:18133"/>
        <dbReference type="ChEBI" id="CHEBI:15378"/>
        <dbReference type="ChEBI" id="CHEBI:16189"/>
        <dbReference type="ChEBI" id="CHEBI:30616"/>
        <dbReference type="ChEBI" id="CHEBI:33019"/>
        <dbReference type="ChEBI" id="CHEBI:58243"/>
        <dbReference type="EC" id="2.7.7.4"/>
    </reaction>
</comment>
<comment type="pathway">
    <text evidence="1">Sulfur metabolism; hydrogen sulfide biosynthesis; sulfite from sulfate: step 1/3.</text>
</comment>
<comment type="subunit">
    <text evidence="1">Heterodimer composed of CysD, the smaller subunit, and CysN.</text>
</comment>
<comment type="similarity">
    <text evidence="1">Belongs to the PAPS reductase family. CysD subfamily.</text>
</comment>
<proteinExistence type="inferred from homology"/>